<name>RS27_PYRAE</name>
<comment type="cofactor">
    <cofactor evidence="1">
        <name>Zn(2+)</name>
        <dbReference type="ChEBI" id="CHEBI:29105"/>
    </cofactor>
    <text evidence="1 2">Binds 1 zinc ion per subunit.</text>
</comment>
<comment type="subunit">
    <text evidence="1">Part of the 30S ribosomal subunit.</text>
</comment>
<comment type="similarity">
    <text evidence="1">Belongs to the eukaryotic ribosomal protein eS27 family.</text>
</comment>
<protein>
    <recommendedName>
        <fullName evidence="1">Small ribosomal subunit protein eS27</fullName>
    </recommendedName>
</protein>
<sequence>MPVRFSKVLIPQPKSKFIKTRCPDCGNEQITFSHAAMVVRCLVCGRVLAIPTGGKAKLAGHVVKVLE</sequence>
<proteinExistence type="inferred from homology"/>
<evidence type="ECO:0000255" key="1">
    <source>
        <dbReference type="HAMAP-Rule" id="MF_00371"/>
    </source>
</evidence>
<evidence type="ECO:0000305" key="2"/>
<reference key="1">
    <citation type="journal article" date="2002" name="Proc. Natl. Acad. Sci. U.S.A.">
        <title>Genome sequence of the hyperthermophilic crenarchaeon Pyrobaculum aerophilum.</title>
        <authorList>
            <person name="Fitz-Gibbon S.T."/>
            <person name="Ladner H."/>
            <person name="Kim U.-J."/>
            <person name="Stetter K.O."/>
            <person name="Simon M.I."/>
            <person name="Miller J.H."/>
        </authorList>
    </citation>
    <scope>NUCLEOTIDE SEQUENCE [LARGE SCALE GENOMIC DNA]</scope>
    <source>
        <strain>ATCC 51768 / DSM 7523 / JCM 9630 / CIP 104966 / NBRC 100827 / IM2</strain>
    </source>
</reference>
<accession>Q8ZTY4</accession>
<keyword id="KW-0479">Metal-binding</keyword>
<keyword id="KW-1185">Reference proteome</keyword>
<keyword id="KW-0687">Ribonucleoprotein</keyword>
<keyword id="KW-0689">Ribosomal protein</keyword>
<keyword id="KW-0862">Zinc</keyword>
<keyword id="KW-0863">Zinc-finger</keyword>
<organism>
    <name type="scientific">Pyrobaculum aerophilum (strain ATCC 51768 / DSM 7523 / JCM 9630 / CIP 104966 / NBRC 100827 / IM2)</name>
    <dbReference type="NCBI Taxonomy" id="178306"/>
    <lineage>
        <taxon>Archaea</taxon>
        <taxon>Thermoproteota</taxon>
        <taxon>Thermoprotei</taxon>
        <taxon>Thermoproteales</taxon>
        <taxon>Thermoproteaceae</taxon>
        <taxon>Pyrobaculum</taxon>
    </lineage>
</organism>
<feature type="chain" id="PRO_0000149077" description="Small ribosomal subunit protein eS27">
    <location>
        <begin position="1"/>
        <end position="67"/>
    </location>
</feature>
<feature type="zinc finger region" description="C4-type" evidence="1">
    <location>
        <begin position="22"/>
        <end position="44"/>
    </location>
</feature>
<feature type="binding site" evidence="1">
    <location>
        <position position="22"/>
    </location>
    <ligand>
        <name>Zn(2+)</name>
        <dbReference type="ChEBI" id="CHEBI:29105"/>
    </ligand>
</feature>
<feature type="binding site" evidence="1">
    <location>
        <position position="25"/>
    </location>
    <ligand>
        <name>Zn(2+)</name>
        <dbReference type="ChEBI" id="CHEBI:29105"/>
    </ligand>
</feature>
<feature type="binding site" evidence="1">
    <location>
        <position position="41"/>
    </location>
    <ligand>
        <name>Zn(2+)</name>
        <dbReference type="ChEBI" id="CHEBI:29105"/>
    </ligand>
</feature>
<feature type="binding site" evidence="1">
    <location>
        <position position="44"/>
    </location>
    <ligand>
        <name>Zn(2+)</name>
        <dbReference type="ChEBI" id="CHEBI:29105"/>
    </ligand>
</feature>
<gene>
    <name evidence="1" type="primary">rps27e</name>
    <name type="ordered locus">PAE3033</name>
</gene>
<dbReference type="EMBL" id="AE009441">
    <property type="protein sequence ID" value="AAL64625.1"/>
    <property type="molecule type" value="Genomic_DNA"/>
</dbReference>
<dbReference type="RefSeq" id="WP_011009093.1">
    <property type="nucleotide sequence ID" value="NC_003364.1"/>
</dbReference>
<dbReference type="SMR" id="Q8ZTY4"/>
<dbReference type="FunCoup" id="Q8ZTY4">
    <property type="interactions" value="174"/>
</dbReference>
<dbReference type="STRING" id="178306.PAE3033"/>
<dbReference type="EnsemblBacteria" id="AAL64625">
    <property type="protein sequence ID" value="AAL64625"/>
    <property type="gene ID" value="PAE3033"/>
</dbReference>
<dbReference type="GeneID" id="1463794"/>
<dbReference type="KEGG" id="pai:PAE3033"/>
<dbReference type="PATRIC" id="fig|178306.9.peg.2282"/>
<dbReference type="eggNOG" id="arCOG04108">
    <property type="taxonomic scope" value="Archaea"/>
</dbReference>
<dbReference type="HOGENOM" id="CLU_199465_0_0_2"/>
<dbReference type="InParanoid" id="Q8ZTY4"/>
<dbReference type="Proteomes" id="UP000002439">
    <property type="component" value="Chromosome"/>
</dbReference>
<dbReference type="GO" id="GO:0022627">
    <property type="term" value="C:cytosolic small ribosomal subunit"/>
    <property type="evidence" value="ECO:0000318"/>
    <property type="project" value="GO_Central"/>
</dbReference>
<dbReference type="GO" id="GO:0003723">
    <property type="term" value="F:RNA binding"/>
    <property type="evidence" value="ECO:0000318"/>
    <property type="project" value="GO_Central"/>
</dbReference>
<dbReference type="GO" id="GO:0003735">
    <property type="term" value="F:structural constituent of ribosome"/>
    <property type="evidence" value="ECO:0000318"/>
    <property type="project" value="GO_Central"/>
</dbReference>
<dbReference type="GO" id="GO:0008270">
    <property type="term" value="F:zinc ion binding"/>
    <property type="evidence" value="ECO:0007669"/>
    <property type="project" value="UniProtKB-UniRule"/>
</dbReference>
<dbReference type="GO" id="GO:0000028">
    <property type="term" value="P:ribosomal small subunit assembly"/>
    <property type="evidence" value="ECO:0000318"/>
    <property type="project" value="GO_Central"/>
</dbReference>
<dbReference type="GO" id="GO:0006412">
    <property type="term" value="P:translation"/>
    <property type="evidence" value="ECO:0007669"/>
    <property type="project" value="UniProtKB-UniRule"/>
</dbReference>
<dbReference type="FunFam" id="2.20.25.100:FF:000002">
    <property type="entry name" value="30S ribosomal protein S27e"/>
    <property type="match status" value="1"/>
</dbReference>
<dbReference type="Gene3D" id="2.20.25.100">
    <property type="entry name" value="Zn-binding ribosomal proteins"/>
    <property type="match status" value="1"/>
</dbReference>
<dbReference type="HAMAP" id="MF_00371">
    <property type="entry name" value="Ribosomal_eS27"/>
    <property type="match status" value="1"/>
</dbReference>
<dbReference type="InterPro" id="IPR000592">
    <property type="entry name" value="Ribosomal_eS27"/>
</dbReference>
<dbReference type="InterPro" id="IPR023407">
    <property type="entry name" value="Ribosomal_eS27_Zn-bd_dom_sf"/>
</dbReference>
<dbReference type="InterPro" id="IPR011332">
    <property type="entry name" value="Ribosomal_zn-bd"/>
</dbReference>
<dbReference type="NCBIfam" id="NF001629">
    <property type="entry name" value="PRK00415.1"/>
    <property type="match status" value="1"/>
</dbReference>
<dbReference type="PANTHER" id="PTHR11594">
    <property type="entry name" value="40S RIBOSOMAL PROTEIN S27"/>
    <property type="match status" value="1"/>
</dbReference>
<dbReference type="Pfam" id="PF01667">
    <property type="entry name" value="Ribosomal_S27e"/>
    <property type="match status" value="1"/>
</dbReference>
<dbReference type="SUPFAM" id="SSF57829">
    <property type="entry name" value="Zn-binding ribosomal proteins"/>
    <property type="match status" value="1"/>
</dbReference>
<dbReference type="PROSITE" id="PS01168">
    <property type="entry name" value="RIBOSOMAL_S27E"/>
    <property type="match status" value="1"/>
</dbReference>